<keyword id="KW-0004">4Fe-4S</keyword>
<keyword id="KW-0342">GTP-binding</keyword>
<keyword id="KW-0408">Iron</keyword>
<keyword id="KW-0411">Iron-sulfur</keyword>
<keyword id="KW-0456">Lyase</keyword>
<keyword id="KW-0479">Metal-binding</keyword>
<keyword id="KW-0501">Molybdenum cofactor biosynthesis</keyword>
<keyword id="KW-0547">Nucleotide-binding</keyword>
<keyword id="KW-0949">S-adenosyl-L-methionine</keyword>
<reference key="1">
    <citation type="journal article" date="2011" name="MBio">
        <title>Novel metabolic attributes of the genus Cyanothece, comprising a group of unicellular nitrogen-fixing Cyanobacteria.</title>
        <authorList>
            <person name="Bandyopadhyay A."/>
            <person name="Elvitigala T."/>
            <person name="Welsh E."/>
            <person name="Stockel J."/>
            <person name="Liberton M."/>
            <person name="Min H."/>
            <person name="Sherman L.A."/>
            <person name="Pakrasi H.B."/>
        </authorList>
    </citation>
    <scope>NUCLEOTIDE SEQUENCE [LARGE SCALE GENOMIC DNA]</scope>
    <source>
        <strain>PCC 7425 / ATCC 29141</strain>
    </source>
</reference>
<evidence type="ECO:0000255" key="1">
    <source>
        <dbReference type="HAMAP-Rule" id="MF_01225"/>
    </source>
</evidence>
<evidence type="ECO:0000255" key="2">
    <source>
        <dbReference type="PROSITE-ProRule" id="PRU01266"/>
    </source>
</evidence>
<organism>
    <name type="scientific">Cyanothece sp. (strain PCC 7425 / ATCC 29141)</name>
    <dbReference type="NCBI Taxonomy" id="395961"/>
    <lineage>
        <taxon>Bacteria</taxon>
        <taxon>Bacillati</taxon>
        <taxon>Cyanobacteriota</taxon>
        <taxon>Cyanophyceae</taxon>
        <taxon>Gomontiellales</taxon>
        <taxon>Cyanothecaceae</taxon>
        <taxon>Cyanothece</taxon>
    </lineage>
</organism>
<name>MOAA_CYAP4</name>
<gene>
    <name evidence="1" type="primary">moaA</name>
    <name type="ordered locus">Cyan7425_0881</name>
</gene>
<comment type="function">
    <text evidence="1">Catalyzes the cyclization of GTP to (8S)-3',8-cyclo-7,8-dihydroguanosine 5'-triphosphate.</text>
</comment>
<comment type="catalytic activity">
    <reaction evidence="1">
        <text>GTP + AH2 + S-adenosyl-L-methionine = (8S)-3',8-cyclo-7,8-dihydroguanosine 5'-triphosphate + 5'-deoxyadenosine + L-methionine + A + H(+)</text>
        <dbReference type="Rhea" id="RHEA:49576"/>
        <dbReference type="ChEBI" id="CHEBI:13193"/>
        <dbReference type="ChEBI" id="CHEBI:15378"/>
        <dbReference type="ChEBI" id="CHEBI:17319"/>
        <dbReference type="ChEBI" id="CHEBI:17499"/>
        <dbReference type="ChEBI" id="CHEBI:37565"/>
        <dbReference type="ChEBI" id="CHEBI:57844"/>
        <dbReference type="ChEBI" id="CHEBI:59789"/>
        <dbReference type="ChEBI" id="CHEBI:131766"/>
        <dbReference type="EC" id="4.1.99.22"/>
    </reaction>
</comment>
<comment type="cofactor">
    <cofactor evidence="1">
        <name>[4Fe-4S] cluster</name>
        <dbReference type="ChEBI" id="CHEBI:49883"/>
    </cofactor>
    <text evidence="1">Binds 2 [4Fe-4S] clusters. Binds 1 [4Fe-4S] cluster coordinated with 3 cysteines and an exchangeable S-adenosyl-L-methionine and 1 [4Fe-4S] cluster coordinated with 3 cysteines and the GTP-derived substrate.</text>
</comment>
<comment type="pathway">
    <text evidence="1">Cofactor biosynthesis; molybdopterin biosynthesis.</text>
</comment>
<comment type="subunit">
    <text evidence="1">Monomer and homodimer.</text>
</comment>
<comment type="similarity">
    <text evidence="1">Belongs to the radical SAM superfamily. MoaA family.</text>
</comment>
<accession>B8HWW4</accession>
<proteinExistence type="inferred from homology"/>
<dbReference type="EC" id="4.1.99.22" evidence="1"/>
<dbReference type="EMBL" id="CP001344">
    <property type="protein sequence ID" value="ACL43267.1"/>
    <property type="molecule type" value="Genomic_DNA"/>
</dbReference>
<dbReference type="SMR" id="B8HWW4"/>
<dbReference type="STRING" id="395961.Cyan7425_0881"/>
<dbReference type="KEGG" id="cyn:Cyan7425_0881"/>
<dbReference type="eggNOG" id="COG2896">
    <property type="taxonomic scope" value="Bacteria"/>
</dbReference>
<dbReference type="HOGENOM" id="CLU_009273_0_1_3"/>
<dbReference type="OrthoDB" id="9763993at2"/>
<dbReference type="UniPathway" id="UPA00344"/>
<dbReference type="GO" id="GO:0051539">
    <property type="term" value="F:4 iron, 4 sulfur cluster binding"/>
    <property type="evidence" value="ECO:0007669"/>
    <property type="project" value="UniProtKB-UniRule"/>
</dbReference>
<dbReference type="GO" id="GO:0061799">
    <property type="term" value="F:cyclic pyranopterin monophosphate synthase activity"/>
    <property type="evidence" value="ECO:0007669"/>
    <property type="project" value="TreeGrafter"/>
</dbReference>
<dbReference type="GO" id="GO:0061798">
    <property type="term" value="F:GTP 3',8'-cyclase activity"/>
    <property type="evidence" value="ECO:0007669"/>
    <property type="project" value="UniProtKB-UniRule"/>
</dbReference>
<dbReference type="GO" id="GO:0005525">
    <property type="term" value="F:GTP binding"/>
    <property type="evidence" value="ECO:0007669"/>
    <property type="project" value="UniProtKB-UniRule"/>
</dbReference>
<dbReference type="GO" id="GO:0046872">
    <property type="term" value="F:metal ion binding"/>
    <property type="evidence" value="ECO:0007669"/>
    <property type="project" value="UniProtKB-KW"/>
</dbReference>
<dbReference type="GO" id="GO:1904047">
    <property type="term" value="F:S-adenosyl-L-methionine binding"/>
    <property type="evidence" value="ECO:0007669"/>
    <property type="project" value="UniProtKB-UniRule"/>
</dbReference>
<dbReference type="GO" id="GO:0006777">
    <property type="term" value="P:Mo-molybdopterin cofactor biosynthetic process"/>
    <property type="evidence" value="ECO:0007669"/>
    <property type="project" value="UniProtKB-UniRule"/>
</dbReference>
<dbReference type="CDD" id="cd01335">
    <property type="entry name" value="Radical_SAM"/>
    <property type="match status" value="1"/>
</dbReference>
<dbReference type="CDD" id="cd21117">
    <property type="entry name" value="Twitch_MoaA"/>
    <property type="match status" value="1"/>
</dbReference>
<dbReference type="Gene3D" id="3.20.20.70">
    <property type="entry name" value="Aldolase class I"/>
    <property type="match status" value="1"/>
</dbReference>
<dbReference type="HAMAP" id="MF_01225_B">
    <property type="entry name" value="MoaA_B"/>
    <property type="match status" value="1"/>
</dbReference>
<dbReference type="InterPro" id="IPR013785">
    <property type="entry name" value="Aldolase_TIM"/>
</dbReference>
<dbReference type="InterPro" id="IPR006638">
    <property type="entry name" value="Elp3/MiaA/NifB-like_rSAM"/>
</dbReference>
<dbReference type="InterPro" id="IPR013483">
    <property type="entry name" value="MoaA"/>
</dbReference>
<dbReference type="InterPro" id="IPR000385">
    <property type="entry name" value="MoaA_NifB_PqqE_Fe-S-bd_CS"/>
</dbReference>
<dbReference type="InterPro" id="IPR010505">
    <property type="entry name" value="MoaA_twitch"/>
</dbReference>
<dbReference type="InterPro" id="IPR050105">
    <property type="entry name" value="MoCo_biosynth_MoaA/MoaC"/>
</dbReference>
<dbReference type="InterPro" id="IPR007197">
    <property type="entry name" value="rSAM"/>
</dbReference>
<dbReference type="NCBIfam" id="TIGR02666">
    <property type="entry name" value="moaA"/>
    <property type="match status" value="1"/>
</dbReference>
<dbReference type="PANTHER" id="PTHR22960:SF0">
    <property type="entry name" value="MOLYBDENUM COFACTOR BIOSYNTHESIS PROTEIN 1"/>
    <property type="match status" value="1"/>
</dbReference>
<dbReference type="PANTHER" id="PTHR22960">
    <property type="entry name" value="MOLYBDOPTERIN COFACTOR SYNTHESIS PROTEIN A"/>
    <property type="match status" value="1"/>
</dbReference>
<dbReference type="Pfam" id="PF13353">
    <property type="entry name" value="Fer4_12"/>
    <property type="match status" value="1"/>
</dbReference>
<dbReference type="Pfam" id="PF06463">
    <property type="entry name" value="Mob_synth_C"/>
    <property type="match status" value="1"/>
</dbReference>
<dbReference type="Pfam" id="PF04055">
    <property type="entry name" value="Radical_SAM"/>
    <property type="match status" value="1"/>
</dbReference>
<dbReference type="SFLD" id="SFLDG01383">
    <property type="entry name" value="cyclic_pyranopterin_phosphate"/>
    <property type="match status" value="1"/>
</dbReference>
<dbReference type="SFLD" id="SFLDG01072">
    <property type="entry name" value="dehydrogenase_like"/>
    <property type="match status" value="1"/>
</dbReference>
<dbReference type="SMART" id="SM00729">
    <property type="entry name" value="Elp3"/>
    <property type="match status" value="1"/>
</dbReference>
<dbReference type="SUPFAM" id="SSF102114">
    <property type="entry name" value="Radical SAM enzymes"/>
    <property type="match status" value="1"/>
</dbReference>
<dbReference type="PROSITE" id="PS01305">
    <property type="entry name" value="MOAA_NIFB_PQQE"/>
    <property type="match status" value="1"/>
</dbReference>
<dbReference type="PROSITE" id="PS51918">
    <property type="entry name" value="RADICAL_SAM"/>
    <property type="match status" value="1"/>
</dbReference>
<feature type="chain" id="PRO_1000164913" description="GTP 3',8-cyclase">
    <location>
        <begin position="1"/>
        <end position="329"/>
    </location>
</feature>
<feature type="domain" description="Radical SAM core" evidence="2">
    <location>
        <begin position="1"/>
        <end position="229"/>
    </location>
</feature>
<feature type="binding site" evidence="1">
    <location>
        <position position="8"/>
    </location>
    <ligand>
        <name>GTP</name>
        <dbReference type="ChEBI" id="CHEBI:37565"/>
    </ligand>
</feature>
<feature type="binding site" evidence="1">
    <location>
        <position position="15"/>
    </location>
    <ligand>
        <name>[4Fe-4S] cluster</name>
        <dbReference type="ChEBI" id="CHEBI:49883"/>
        <label>1</label>
        <note>4Fe-4S-S-AdoMet</note>
    </ligand>
</feature>
<feature type="binding site" evidence="1">
    <location>
        <position position="19"/>
    </location>
    <ligand>
        <name>[4Fe-4S] cluster</name>
        <dbReference type="ChEBI" id="CHEBI:49883"/>
        <label>1</label>
        <note>4Fe-4S-S-AdoMet</note>
    </ligand>
</feature>
<feature type="binding site" evidence="1">
    <location>
        <position position="21"/>
    </location>
    <ligand>
        <name>S-adenosyl-L-methionine</name>
        <dbReference type="ChEBI" id="CHEBI:59789"/>
    </ligand>
</feature>
<feature type="binding site" evidence="1">
    <location>
        <position position="22"/>
    </location>
    <ligand>
        <name>[4Fe-4S] cluster</name>
        <dbReference type="ChEBI" id="CHEBI:49883"/>
        <label>1</label>
        <note>4Fe-4S-S-AdoMet</note>
    </ligand>
</feature>
<feature type="binding site" evidence="1">
    <location>
        <position position="60"/>
    </location>
    <ligand>
        <name>GTP</name>
        <dbReference type="ChEBI" id="CHEBI:37565"/>
    </ligand>
</feature>
<feature type="binding site" evidence="1">
    <location>
        <position position="64"/>
    </location>
    <ligand>
        <name>S-adenosyl-L-methionine</name>
        <dbReference type="ChEBI" id="CHEBI:59789"/>
    </ligand>
</feature>
<feature type="binding site" evidence="1">
    <location>
        <position position="91"/>
    </location>
    <ligand>
        <name>GTP</name>
        <dbReference type="ChEBI" id="CHEBI:37565"/>
    </ligand>
</feature>
<feature type="binding site" evidence="1">
    <location>
        <position position="115"/>
    </location>
    <ligand>
        <name>S-adenosyl-L-methionine</name>
        <dbReference type="ChEBI" id="CHEBI:59789"/>
    </ligand>
</feature>
<feature type="binding site" evidence="1">
    <location>
        <position position="155"/>
    </location>
    <ligand>
        <name>GTP</name>
        <dbReference type="ChEBI" id="CHEBI:37565"/>
    </ligand>
</feature>
<feature type="binding site" evidence="1">
    <location>
        <position position="189"/>
    </location>
    <ligand>
        <name>S-adenosyl-L-methionine</name>
        <dbReference type="ChEBI" id="CHEBI:59789"/>
    </ligand>
</feature>
<feature type="binding site" evidence="1">
    <location>
        <position position="252"/>
    </location>
    <ligand>
        <name>[4Fe-4S] cluster</name>
        <dbReference type="ChEBI" id="CHEBI:49883"/>
        <label>2</label>
        <note>4Fe-4S-substrate</note>
    </ligand>
</feature>
<feature type="binding site" evidence="1">
    <location>
        <position position="255"/>
    </location>
    <ligand>
        <name>[4Fe-4S] cluster</name>
        <dbReference type="ChEBI" id="CHEBI:49883"/>
        <label>2</label>
        <note>4Fe-4S-substrate</note>
    </ligand>
</feature>
<feature type="binding site" evidence="1">
    <location>
        <begin position="257"/>
        <end position="259"/>
    </location>
    <ligand>
        <name>GTP</name>
        <dbReference type="ChEBI" id="CHEBI:37565"/>
    </ligand>
</feature>
<feature type="binding site" evidence="1">
    <location>
        <position position="269"/>
    </location>
    <ligand>
        <name>[4Fe-4S] cluster</name>
        <dbReference type="ChEBI" id="CHEBI:49883"/>
        <label>2</label>
        <note>4Fe-4S-substrate</note>
    </ligand>
</feature>
<sequence length="329" mass="37275">MNQVDYLRISLVDRCNFRCQYCMPEQAKLEFLAQSEVLTGDEILTLVRDVFLPLGFTRFRLTGGEPLVRPDVVEIVGKIAALPQVQDLSMTTNAYLLTELAEDLYAAGLRRINISLDSLIPAVFDQIVGTQGRTRWQQVWEGIQAAYRVGFDPLKLNVVVIPGVNDQEVPDLAALSLDRHWHIRFIEFMPIGNAHLFHHKGWIPSEELRQRIRDRWGLTEGYVRGNGPADVFQIPGAKGTLGFISQMSECFCDRCNRVRLSADGWLRPCLLNETGQIDLKTGLRDNVPIEELRERVRQLLLLKPEINYKGRDSGTAGAEYHRTMSQIGG</sequence>
<protein>
    <recommendedName>
        <fullName evidence="1">GTP 3',8-cyclase</fullName>
        <ecNumber evidence="1">4.1.99.22</ecNumber>
    </recommendedName>
    <alternativeName>
        <fullName evidence="1">Molybdenum cofactor biosynthesis protein A</fullName>
    </alternativeName>
</protein>